<sequence>MDFNLNDEQELFVAGIRELMASENWEAYFAECDRDSVYPERFVKALADMGIDSLLIPEEHGGLEAGFVTVAAVWMELGRLGAPTYVLYQLPGGFNTFLREGTQEQIDKIMAFRGTGKQMWNSAITEPGAGSDVGSLKTTYTRKNGKVYLNGSKCFITSSAYTPYIVVMARDGASPDKPVYTEWFVDMSKAGIKVNKLEKLGLRMDSCCEITFDDVELDEKDMFGREGNGFNRVKEEFDHERFLVALTNYGTAMCAFEDAARYANQRVQFGEAIGRFQLIQEKFAHMAIKLNSMKNMLLEAAWKADNGTITSGDAAMCKYFCANAAFEVVDTAMQVLGGVGIAGNHRITRFWRDLRVDRVSGGSDEMQILTLGRAVLKQYR</sequence>
<gene>
    <name evidence="1" type="primary">caiA</name>
    <name type="ordered locus">SSPA0070</name>
</gene>
<accession>B5BL57</accession>
<comment type="function">
    <text evidence="1">Catalyzes the reduction of crotonobetainyl-CoA to gamma-butyrobetainyl-CoA.</text>
</comment>
<comment type="catalytic activity">
    <reaction evidence="1">
        <text>4-(trimethylamino)butanoyl-CoA + oxidized [electron-transfer flavoprotein] + H(+) = crotonobetainyl-CoA + reduced [electron-transfer flavoprotein]</text>
        <dbReference type="Rhea" id="RHEA:51584"/>
        <dbReference type="Rhea" id="RHEA-COMP:10685"/>
        <dbReference type="Rhea" id="RHEA-COMP:10686"/>
        <dbReference type="ChEBI" id="CHEBI:15378"/>
        <dbReference type="ChEBI" id="CHEBI:57692"/>
        <dbReference type="ChEBI" id="CHEBI:58307"/>
        <dbReference type="ChEBI" id="CHEBI:60933"/>
        <dbReference type="ChEBI" id="CHEBI:61513"/>
        <dbReference type="EC" id="1.3.8.13"/>
    </reaction>
</comment>
<comment type="cofactor">
    <cofactor evidence="1">
        <name>FAD</name>
        <dbReference type="ChEBI" id="CHEBI:57692"/>
    </cofactor>
</comment>
<comment type="pathway">
    <text evidence="1">Amine and polyamine metabolism; carnitine metabolism.</text>
</comment>
<comment type="subunit">
    <text evidence="1">Homotetramer.</text>
</comment>
<comment type="subcellular location">
    <subcellularLocation>
        <location evidence="1">Cytoplasm</location>
    </subcellularLocation>
</comment>
<comment type="similarity">
    <text evidence="1">Belongs to the acyl-CoA dehydrogenase family.</text>
</comment>
<proteinExistence type="inferred from homology"/>
<organism>
    <name type="scientific">Salmonella paratyphi A (strain AKU_12601)</name>
    <dbReference type="NCBI Taxonomy" id="554290"/>
    <lineage>
        <taxon>Bacteria</taxon>
        <taxon>Pseudomonadati</taxon>
        <taxon>Pseudomonadota</taxon>
        <taxon>Gammaproteobacteria</taxon>
        <taxon>Enterobacterales</taxon>
        <taxon>Enterobacteriaceae</taxon>
        <taxon>Salmonella</taxon>
    </lineage>
</organism>
<dbReference type="EC" id="1.3.8.13" evidence="1"/>
<dbReference type="EMBL" id="FM200053">
    <property type="protein sequence ID" value="CAR58181.1"/>
    <property type="molecule type" value="Genomic_DNA"/>
</dbReference>
<dbReference type="RefSeq" id="WP_000347134.1">
    <property type="nucleotide sequence ID" value="NC_011147.1"/>
</dbReference>
<dbReference type="SMR" id="B5BL57"/>
<dbReference type="GeneID" id="44979088"/>
<dbReference type="KEGG" id="sek:SSPA0070"/>
<dbReference type="HOGENOM" id="CLU_018204_0_2_6"/>
<dbReference type="UniPathway" id="UPA00117"/>
<dbReference type="Proteomes" id="UP000001869">
    <property type="component" value="Chromosome"/>
</dbReference>
<dbReference type="GO" id="GO:0005737">
    <property type="term" value="C:cytoplasm"/>
    <property type="evidence" value="ECO:0007669"/>
    <property type="project" value="UniProtKB-SubCell"/>
</dbReference>
<dbReference type="GO" id="GO:0003995">
    <property type="term" value="F:acyl-CoA dehydrogenase activity"/>
    <property type="evidence" value="ECO:0007669"/>
    <property type="project" value="InterPro"/>
</dbReference>
<dbReference type="GO" id="GO:0050660">
    <property type="term" value="F:flavin adenine dinucleotide binding"/>
    <property type="evidence" value="ECO:0007669"/>
    <property type="project" value="InterPro"/>
</dbReference>
<dbReference type="GO" id="GO:0009437">
    <property type="term" value="P:carnitine metabolic process"/>
    <property type="evidence" value="ECO:0007669"/>
    <property type="project" value="UniProtKB-UniRule"/>
</dbReference>
<dbReference type="CDD" id="cd00567">
    <property type="entry name" value="ACAD"/>
    <property type="match status" value="1"/>
</dbReference>
<dbReference type="FunFam" id="1.20.140.10:FF:000001">
    <property type="entry name" value="Acyl-CoA dehydrogenase"/>
    <property type="match status" value="1"/>
</dbReference>
<dbReference type="FunFam" id="2.40.110.10:FF:000002">
    <property type="entry name" value="Acyl-CoA dehydrogenase fadE12"/>
    <property type="match status" value="1"/>
</dbReference>
<dbReference type="FunFam" id="1.10.540.10:FF:000005">
    <property type="entry name" value="Crotonobetainyl-CoA reductase"/>
    <property type="match status" value="1"/>
</dbReference>
<dbReference type="Gene3D" id="1.10.540.10">
    <property type="entry name" value="Acyl-CoA dehydrogenase/oxidase, N-terminal domain"/>
    <property type="match status" value="1"/>
</dbReference>
<dbReference type="Gene3D" id="2.40.110.10">
    <property type="entry name" value="Butyryl-CoA Dehydrogenase, subunit A, domain 2"/>
    <property type="match status" value="1"/>
</dbReference>
<dbReference type="Gene3D" id="1.20.140.10">
    <property type="entry name" value="Butyryl-CoA Dehydrogenase, subunit A, domain 3"/>
    <property type="match status" value="1"/>
</dbReference>
<dbReference type="HAMAP" id="MF_01052">
    <property type="entry name" value="CaiA"/>
    <property type="match status" value="1"/>
</dbReference>
<dbReference type="InterPro" id="IPR006089">
    <property type="entry name" value="Acyl-CoA_DH_CS"/>
</dbReference>
<dbReference type="InterPro" id="IPR006091">
    <property type="entry name" value="Acyl-CoA_Oxase/DH_mid-dom"/>
</dbReference>
<dbReference type="InterPro" id="IPR046373">
    <property type="entry name" value="Acyl-CoA_Oxase/DH_mid-dom_sf"/>
</dbReference>
<dbReference type="InterPro" id="IPR036250">
    <property type="entry name" value="AcylCo_DH-like_C"/>
</dbReference>
<dbReference type="InterPro" id="IPR009075">
    <property type="entry name" value="AcylCo_DH/oxidase_C"/>
</dbReference>
<dbReference type="InterPro" id="IPR013786">
    <property type="entry name" value="AcylCoA_DH/ox_N"/>
</dbReference>
<dbReference type="InterPro" id="IPR037069">
    <property type="entry name" value="AcylCoA_DH/ox_N_sf"/>
</dbReference>
<dbReference type="InterPro" id="IPR009100">
    <property type="entry name" value="AcylCoA_DH/oxidase_NM_dom_sf"/>
</dbReference>
<dbReference type="InterPro" id="IPR023450">
    <property type="entry name" value="CaiA"/>
</dbReference>
<dbReference type="NCBIfam" id="NF002885">
    <property type="entry name" value="PRK03354.1"/>
    <property type="match status" value="1"/>
</dbReference>
<dbReference type="PANTHER" id="PTHR43884">
    <property type="entry name" value="ACYL-COA DEHYDROGENASE"/>
    <property type="match status" value="1"/>
</dbReference>
<dbReference type="PANTHER" id="PTHR43884:SF12">
    <property type="entry name" value="ISOVALERYL-COA DEHYDROGENASE, MITOCHONDRIAL-RELATED"/>
    <property type="match status" value="1"/>
</dbReference>
<dbReference type="Pfam" id="PF00441">
    <property type="entry name" value="Acyl-CoA_dh_1"/>
    <property type="match status" value="1"/>
</dbReference>
<dbReference type="Pfam" id="PF02770">
    <property type="entry name" value="Acyl-CoA_dh_M"/>
    <property type="match status" value="1"/>
</dbReference>
<dbReference type="Pfam" id="PF02771">
    <property type="entry name" value="Acyl-CoA_dh_N"/>
    <property type="match status" value="1"/>
</dbReference>
<dbReference type="PIRSF" id="PIRSF016578">
    <property type="entry name" value="HsaA"/>
    <property type="match status" value="1"/>
</dbReference>
<dbReference type="SUPFAM" id="SSF47203">
    <property type="entry name" value="Acyl-CoA dehydrogenase C-terminal domain-like"/>
    <property type="match status" value="1"/>
</dbReference>
<dbReference type="SUPFAM" id="SSF56645">
    <property type="entry name" value="Acyl-CoA dehydrogenase NM domain-like"/>
    <property type="match status" value="1"/>
</dbReference>
<dbReference type="PROSITE" id="PS00072">
    <property type="entry name" value="ACYL_COA_DH_1"/>
    <property type="match status" value="1"/>
</dbReference>
<dbReference type="PROSITE" id="PS00073">
    <property type="entry name" value="ACYL_COA_DH_2"/>
    <property type="match status" value="1"/>
</dbReference>
<feature type="chain" id="PRO_1000136284" description="Crotonobetainyl-CoA reductase">
    <location>
        <begin position="1"/>
        <end position="380"/>
    </location>
</feature>
<protein>
    <recommendedName>
        <fullName evidence="1">Crotonobetainyl-CoA reductase</fullName>
        <ecNumber evidence="1">1.3.8.13</ecNumber>
    </recommendedName>
    <alternativeName>
        <fullName evidence="1">Crotonobetainyl-CoA dehydrogenase</fullName>
    </alternativeName>
</protein>
<name>CAIA_SALPK</name>
<reference key="1">
    <citation type="journal article" date="2009" name="BMC Genomics">
        <title>Pseudogene accumulation in the evolutionary histories of Salmonella enterica serovars Paratyphi A and Typhi.</title>
        <authorList>
            <person name="Holt K.E."/>
            <person name="Thomson N.R."/>
            <person name="Wain J."/>
            <person name="Langridge G.C."/>
            <person name="Hasan R."/>
            <person name="Bhutta Z.A."/>
            <person name="Quail M.A."/>
            <person name="Norbertczak H."/>
            <person name="Walker D."/>
            <person name="Simmonds M."/>
            <person name="White B."/>
            <person name="Bason N."/>
            <person name="Mungall K."/>
            <person name="Dougan G."/>
            <person name="Parkhill J."/>
        </authorList>
    </citation>
    <scope>NUCLEOTIDE SEQUENCE [LARGE SCALE GENOMIC DNA]</scope>
    <source>
        <strain>AKU_12601</strain>
    </source>
</reference>
<keyword id="KW-0963">Cytoplasm</keyword>
<keyword id="KW-0274">FAD</keyword>
<keyword id="KW-0285">Flavoprotein</keyword>
<keyword id="KW-0560">Oxidoreductase</keyword>
<evidence type="ECO:0000255" key="1">
    <source>
        <dbReference type="HAMAP-Rule" id="MF_01052"/>
    </source>
</evidence>